<comment type="function">
    <text evidence="1">Endonuclease IV plays a role in DNA repair. It cleaves phosphodiester bonds at apurinic or apyrimidinic (AP) sites, generating a 3'-hydroxyl group and a 5'-terminal sugar phosphate.</text>
</comment>
<comment type="catalytic activity">
    <reaction evidence="1">
        <text>Endonucleolytic cleavage to 5'-phosphooligonucleotide end-products.</text>
        <dbReference type="EC" id="3.1.21.2"/>
    </reaction>
</comment>
<comment type="cofactor">
    <cofactor evidence="1">
        <name>Zn(2+)</name>
        <dbReference type="ChEBI" id="CHEBI:29105"/>
    </cofactor>
    <text evidence="1">Binds 3 Zn(2+) ions.</text>
</comment>
<comment type="similarity">
    <text evidence="1">Belongs to the AP endonuclease 2 family.</text>
</comment>
<name>END4_SALCH</name>
<keyword id="KW-0227">DNA damage</keyword>
<keyword id="KW-0234">DNA repair</keyword>
<keyword id="KW-0255">Endonuclease</keyword>
<keyword id="KW-0378">Hydrolase</keyword>
<keyword id="KW-0479">Metal-binding</keyword>
<keyword id="KW-0540">Nuclease</keyword>
<keyword id="KW-0862">Zinc</keyword>
<evidence type="ECO:0000255" key="1">
    <source>
        <dbReference type="HAMAP-Rule" id="MF_00152"/>
    </source>
</evidence>
<gene>
    <name evidence="1" type="primary">nfo</name>
    <name type="ordered locus">SCH_2219</name>
</gene>
<dbReference type="EC" id="3.1.21.2" evidence="1"/>
<dbReference type="EMBL" id="AE017220">
    <property type="protein sequence ID" value="AAX66125.1"/>
    <property type="molecule type" value="Genomic_DNA"/>
</dbReference>
<dbReference type="RefSeq" id="WP_000873921.1">
    <property type="nucleotide sequence ID" value="NC_006905.1"/>
</dbReference>
<dbReference type="SMR" id="Q57MD6"/>
<dbReference type="KEGG" id="sec:SCH_2219"/>
<dbReference type="HOGENOM" id="CLU_025885_0_4_6"/>
<dbReference type="Proteomes" id="UP000000538">
    <property type="component" value="Chromosome"/>
</dbReference>
<dbReference type="GO" id="GO:0008833">
    <property type="term" value="F:deoxyribonuclease IV (phage-T4-induced) activity"/>
    <property type="evidence" value="ECO:0007669"/>
    <property type="project" value="UniProtKB-UniRule"/>
</dbReference>
<dbReference type="GO" id="GO:0003677">
    <property type="term" value="F:DNA binding"/>
    <property type="evidence" value="ECO:0007669"/>
    <property type="project" value="InterPro"/>
</dbReference>
<dbReference type="GO" id="GO:0003906">
    <property type="term" value="F:DNA-(apurinic or apyrimidinic site) endonuclease activity"/>
    <property type="evidence" value="ECO:0007669"/>
    <property type="project" value="TreeGrafter"/>
</dbReference>
<dbReference type="GO" id="GO:0008081">
    <property type="term" value="F:phosphoric diester hydrolase activity"/>
    <property type="evidence" value="ECO:0007669"/>
    <property type="project" value="TreeGrafter"/>
</dbReference>
<dbReference type="GO" id="GO:0008270">
    <property type="term" value="F:zinc ion binding"/>
    <property type="evidence" value="ECO:0007669"/>
    <property type="project" value="UniProtKB-UniRule"/>
</dbReference>
<dbReference type="GO" id="GO:0006284">
    <property type="term" value="P:base-excision repair"/>
    <property type="evidence" value="ECO:0007669"/>
    <property type="project" value="TreeGrafter"/>
</dbReference>
<dbReference type="CDD" id="cd00019">
    <property type="entry name" value="AP2Ec"/>
    <property type="match status" value="1"/>
</dbReference>
<dbReference type="FunFam" id="3.20.20.150:FF:000001">
    <property type="entry name" value="Probable endonuclease 4"/>
    <property type="match status" value="1"/>
</dbReference>
<dbReference type="Gene3D" id="3.20.20.150">
    <property type="entry name" value="Divalent-metal-dependent TIM barrel enzymes"/>
    <property type="match status" value="1"/>
</dbReference>
<dbReference type="HAMAP" id="MF_00152">
    <property type="entry name" value="Nfo"/>
    <property type="match status" value="1"/>
</dbReference>
<dbReference type="InterPro" id="IPR001719">
    <property type="entry name" value="AP_endonuc_2"/>
</dbReference>
<dbReference type="InterPro" id="IPR018246">
    <property type="entry name" value="AP_endonuc_F2_Zn_BS"/>
</dbReference>
<dbReference type="InterPro" id="IPR036237">
    <property type="entry name" value="Xyl_isomerase-like_sf"/>
</dbReference>
<dbReference type="InterPro" id="IPR013022">
    <property type="entry name" value="Xyl_isomerase-like_TIM-brl"/>
</dbReference>
<dbReference type="NCBIfam" id="TIGR00587">
    <property type="entry name" value="nfo"/>
    <property type="match status" value="1"/>
</dbReference>
<dbReference type="NCBIfam" id="NF002199">
    <property type="entry name" value="PRK01060.1-4"/>
    <property type="match status" value="1"/>
</dbReference>
<dbReference type="PANTHER" id="PTHR21445:SF0">
    <property type="entry name" value="APURINIC-APYRIMIDINIC ENDONUCLEASE"/>
    <property type="match status" value="1"/>
</dbReference>
<dbReference type="PANTHER" id="PTHR21445">
    <property type="entry name" value="ENDONUCLEASE IV ENDODEOXYRIBONUCLEASE IV"/>
    <property type="match status" value="1"/>
</dbReference>
<dbReference type="Pfam" id="PF01261">
    <property type="entry name" value="AP_endonuc_2"/>
    <property type="match status" value="1"/>
</dbReference>
<dbReference type="SMART" id="SM00518">
    <property type="entry name" value="AP2Ec"/>
    <property type="match status" value="1"/>
</dbReference>
<dbReference type="SUPFAM" id="SSF51658">
    <property type="entry name" value="Xylose isomerase-like"/>
    <property type="match status" value="1"/>
</dbReference>
<dbReference type="PROSITE" id="PS00729">
    <property type="entry name" value="AP_NUCLEASE_F2_1"/>
    <property type="match status" value="1"/>
</dbReference>
<dbReference type="PROSITE" id="PS00730">
    <property type="entry name" value="AP_NUCLEASE_F2_2"/>
    <property type="match status" value="1"/>
</dbReference>
<dbReference type="PROSITE" id="PS00731">
    <property type="entry name" value="AP_NUCLEASE_F2_3"/>
    <property type="match status" value="1"/>
</dbReference>
<dbReference type="PROSITE" id="PS51432">
    <property type="entry name" value="AP_NUCLEASE_F2_4"/>
    <property type="match status" value="1"/>
</dbReference>
<accession>Q57MD6</accession>
<organism>
    <name type="scientific">Salmonella choleraesuis (strain SC-B67)</name>
    <dbReference type="NCBI Taxonomy" id="321314"/>
    <lineage>
        <taxon>Bacteria</taxon>
        <taxon>Pseudomonadati</taxon>
        <taxon>Pseudomonadota</taxon>
        <taxon>Gammaproteobacteria</taxon>
        <taxon>Enterobacterales</taxon>
        <taxon>Enterobacteriaceae</taxon>
        <taxon>Salmonella</taxon>
    </lineage>
</organism>
<protein>
    <recommendedName>
        <fullName evidence="1">Probable endonuclease 4</fullName>
        <ecNumber evidence="1">3.1.21.2</ecNumber>
    </recommendedName>
    <alternativeName>
        <fullName evidence="1">Endodeoxyribonuclease IV</fullName>
    </alternativeName>
    <alternativeName>
        <fullName evidence="1">Endonuclease IV</fullName>
    </alternativeName>
</protein>
<sequence>MKYIGAHVSAAGGLANAPARAAEIVATAFALFTKNQRQWRAAPLTPQVIDDFKIACEKYHFSAAQILPHDSYLINLGHPVSEALEKSRDAFLDEMQRCEQLGLTLLNFHPGSHLMQIAQEDCLARIAESINIALAQTEGVTAVIENTAGQGSNLGFEFEQLAAIIDGVEDKSRVGVCIDTCHAFAAGYDLRTPEACEKTFAEFGKIVGFQYLRGMHLNDAKSAFGSRVDRHHSLGEGNIGHDAFRWIMQDGRFDGIPLILETINPDIWAEEIAWLKAQQIAEAMA</sequence>
<feature type="chain" id="PRO_1000011330" description="Probable endonuclease 4">
    <location>
        <begin position="1"/>
        <end position="285"/>
    </location>
</feature>
<feature type="binding site" evidence="1">
    <location>
        <position position="69"/>
    </location>
    <ligand>
        <name>Zn(2+)</name>
        <dbReference type="ChEBI" id="CHEBI:29105"/>
        <label>1</label>
    </ligand>
</feature>
<feature type="binding site" evidence="1">
    <location>
        <position position="109"/>
    </location>
    <ligand>
        <name>Zn(2+)</name>
        <dbReference type="ChEBI" id="CHEBI:29105"/>
        <label>1</label>
    </ligand>
</feature>
<feature type="binding site" evidence="1">
    <location>
        <position position="145"/>
    </location>
    <ligand>
        <name>Zn(2+)</name>
        <dbReference type="ChEBI" id="CHEBI:29105"/>
        <label>1</label>
    </ligand>
</feature>
<feature type="binding site" evidence="1">
    <location>
        <position position="145"/>
    </location>
    <ligand>
        <name>Zn(2+)</name>
        <dbReference type="ChEBI" id="CHEBI:29105"/>
        <label>2</label>
    </ligand>
</feature>
<feature type="binding site" evidence="1">
    <location>
        <position position="179"/>
    </location>
    <ligand>
        <name>Zn(2+)</name>
        <dbReference type="ChEBI" id="CHEBI:29105"/>
        <label>2</label>
    </ligand>
</feature>
<feature type="binding site" evidence="1">
    <location>
        <position position="182"/>
    </location>
    <ligand>
        <name>Zn(2+)</name>
        <dbReference type="ChEBI" id="CHEBI:29105"/>
        <label>3</label>
    </ligand>
</feature>
<feature type="binding site" evidence="1">
    <location>
        <position position="216"/>
    </location>
    <ligand>
        <name>Zn(2+)</name>
        <dbReference type="ChEBI" id="CHEBI:29105"/>
        <label>2</label>
    </ligand>
</feature>
<feature type="binding site" evidence="1">
    <location>
        <position position="229"/>
    </location>
    <ligand>
        <name>Zn(2+)</name>
        <dbReference type="ChEBI" id="CHEBI:29105"/>
        <label>3</label>
    </ligand>
</feature>
<feature type="binding site" evidence="1">
    <location>
        <position position="231"/>
    </location>
    <ligand>
        <name>Zn(2+)</name>
        <dbReference type="ChEBI" id="CHEBI:29105"/>
        <label>3</label>
    </ligand>
</feature>
<feature type="binding site" evidence="1">
    <location>
        <position position="261"/>
    </location>
    <ligand>
        <name>Zn(2+)</name>
        <dbReference type="ChEBI" id="CHEBI:29105"/>
        <label>2</label>
    </ligand>
</feature>
<proteinExistence type="inferred from homology"/>
<reference key="1">
    <citation type="journal article" date="2005" name="Nucleic Acids Res.">
        <title>The genome sequence of Salmonella enterica serovar Choleraesuis, a highly invasive and resistant zoonotic pathogen.</title>
        <authorList>
            <person name="Chiu C.-H."/>
            <person name="Tang P."/>
            <person name="Chu C."/>
            <person name="Hu S."/>
            <person name="Bao Q."/>
            <person name="Yu J."/>
            <person name="Chou Y.-Y."/>
            <person name="Wang H.-S."/>
            <person name="Lee Y.-S."/>
        </authorList>
    </citation>
    <scope>NUCLEOTIDE SEQUENCE [LARGE SCALE GENOMIC DNA]</scope>
    <source>
        <strain>SC-B67</strain>
    </source>
</reference>